<accession>B7M9D6</accession>
<feature type="chain" id="PRO_1000193312" description="Protein RecA">
    <location>
        <begin position="1"/>
        <end position="353"/>
    </location>
</feature>
<feature type="region of interest" description="Disordered" evidence="2">
    <location>
        <begin position="330"/>
        <end position="353"/>
    </location>
</feature>
<feature type="compositionally biased region" description="Acidic residues" evidence="2">
    <location>
        <begin position="339"/>
        <end position="353"/>
    </location>
</feature>
<feature type="binding site" evidence="1">
    <location>
        <begin position="67"/>
        <end position="74"/>
    </location>
    <ligand>
        <name>ATP</name>
        <dbReference type="ChEBI" id="CHEBI:30616"/>
    </ligand>
</feature>
<keyword id="KW-0067">ATP-binding</keyword>
<keyword id="KW-0963">Cytoplasm</keyword>
<keyword id="KW-0227">DNA damage</keyword>
<keyword id="KW-0233">DNA recombination</keyword>
<keyword id="KW-0234">DNA repair</keyword>
<keyword id="KW-0238">DNA-binding</keyword>
<keyword id="KW-0547">Nucleotide-binding</keyword>
<keyword id="KW-0742">SOS response</keyword>
<name>RECA_ECO8A</name>
<gene>
    <name evidence="1" type="primary">recA</name>
    <name type="ordered locus">ECIAI1_2791</name>
</gene>
<reference key="1">
    <citation type="journal article" date="2009" name="PLoS Genet.">
        <title>Organised genome dynamics in the Escherichia coli species results in highly diverse adaptive paths.</title>
        <authorList>
            <person name="Touchon M."/>
            <person name="Hoede C."/>
            <person name="Tenaillon O."/>
            <person name="Barbe V."/>
            <person name="Baeriswyl S."/>
            <person name="Bidet P."/>
            <person name="Bingen E."/>
            <person name="Bonacorsi S."/>
            <person name="Bouchier C."/>
            <person name="Bouvet O."/>
            <person name="Calteau A."/>
            <person name="Chiapello H."/>
            <person name="Clermont O."/>
            <person name="Cruveiller S."/>
            <person name="Danchin A."/>
            <person name="Diard M."/>
            <person name="Dossat C."/>
            <person name="Karoui M.E."/>
            <person name="Frapy E."/>
            <person name="Garry L."/>
            <person name="Ghigo J.M."/>
            <person name="Gilles A.M."/>
            <person name="Johnson J."/>
            <person name="Le Bouguenec C."/>
            <person name="Lescat M."/>
            <person name="Mangenot S."/>
            <person name="Martinez-Jehanne V."/>
            <person name="Matic I."/>
            <person name="Nassif X."/>
            <person name="Oztas S."/>
            <person name="Petit M.A."/>
            <person name="Pichon C."/>
            <person name="Rouy Z."/>
            <person name="Ruf C.S."/>
            <person name="Schneider D."/>
            <person name="Tourret J."/>
            <person name="Vacherie B."/>
            <person name="Vallenet D."/>
            <person name="Medigue C."/>
            <person name="Rocha E.P.C."/>
            <person name="Denamur E."/>
        </authorList>
    </citation>
    <scope>NUCLEOTIDE SEQUENCE [LARGE SCALE GENOMIC DNA]</scope>
    <source>
        <strain>IAI1</strain>
    </source>
</reference>
<dbReference type="EMBL" id="CU928160">
    <property type="protein sequence ID" value="CAQ99616.1"/>
    <property type="molecule type" value="Genomic_DNA"/>
</dbReference>
<dbReference type="RefSeq" id="WP_000963143.1">
    <property type="nucleotide sequence ID" value="NC_011741.1"/>
</dbReference>
<dbReference type="SMR" id="B7M9D6"/>
<dbReference type="GeneID" id="93779312"/>
<dbReference type="KEGG" id="ecr:ECIAI1_2791"/>
<dbReference type="HOGENOM" id="CLU_040469_3_2_6"/>
<dbReference type="GO" id="GO:0005829">
    <property type="term" value="C:cytosol"/>
    <property type="evidence" value="ECO:0007669"/>
    <property type="project" value="TreeGrafter"/>
</dbReference>
<dbReference type="GO" id="GO:0005524">
    <property type="term" value="F:ATP binding"/>
    <property type="evidence" value="ECO:0007669"/>
    <property type="project" value="UniProtKB-UniRule"/>
</dbReference>
<dbReference type="GO" id="GO:0016887">
    <property type="term" value="F:ATP hydrolysis activity"/>
    <property type="evidence" value="ECO:0007669"/>
    <property type="project" value="InterPro"/>
</dbReference>
<dbReference type="GO" id="GO:0140664">
    <property type="term" value="F:ATP-dependent DNA damage sensor activity"/>
    <property type="evidence" value="ECO:0007669"/>
    <property type="project" value="InterPro"/>
</dbReference>
<dbReference type="GO" id="GO:0003684">
    <property type="term" value="F:damaged DNA binding"/>
    <property type="evidence" value="ECO:0007669"/>
    <property type="project" value="UniProtKB-UniRule"/>
</dbReference>
<dbReference type="GO" id="GO:0003697">
    <property type="term" value="F:single-stranded DNA binding"/>
    <property type="evidence" value="ECO:0007669"/>
    <property type="project" value="UniProtKB-UniRule"/>
</dbReference>
<dbReference type="GO" id="GO:0006310">
    <property type="term" value="P:DNA recombination"/>
    <property type="evidence" value="ECO:0007669"/>
    <property type="project" value="UniProtKB-UniRule"/>
</dbReference>
<dbReference type="GO" id="GO:0006281">
    <property type="term" value="P:DNA repair"/>
    <property type="evidence" value="ECO:0007669"/>
    <property type="project" value="UniProtKB-UniRule"/>
</dbReference>
<dbReference type="GO" id="GO:0009432">
    <property type="term" value="P:SOS response"/>
    <property type="evidence" value="ECO:0007669"/>
    <property type="project" value="UniProtKB-UniRule"/>
</dbReference>
<dbReference type="CDD" id="cd00983">
    <property type="entry name" value="RecA"/>
    <property type="match status" value="1"/>
</dbReference>
<dbReference type="FunFam" id="3.40.50.300:FF:000087">
    <property type="entry name" value="Recombinase RecA"/>
    <property type="match status" value="1"/>
</dbReference>
<dbReference type="Gene3D" id="3.40.50.300">
    <property type="entry name" value="P-loop containing nucleotide triphosphate hydrolases"/>
    <property type="match status" value="1"/>
</dbReference>
<dbReference type="HAMAP" id="MF_00268">
    <property type="entry name" value="RecA"/>
    <property type="match status" value="1"/>
</dbReference>
<dbReference type="InterPro" id="IPR003593">
    <property type="entry name" value="AAA+_ATPase"/>
</dbReference>
<dbReference type="InterPro" id="IPR013765">
    <property type="entry name" value="DNA_recomb/repair_RecA"/>
</dbReference>
<dbReference type="InterPro" id="IPR020584">
    <property type="entry name" value="DNA_recomb/repair_RecA_CS"/>
</dbReference>
<dbReference type="InterPro" id="IPR027417">
    <property type="entry name" value="P-loop_NTPase"/>
</dbReference>
<dbReference type="InterPro" id="IPR049261">
    <property type="entry name" value="RecA-like_C"/>
</dbReference>
<dbReference type="InterPro" id="IPR049428">
    <property type="entry name" value="RecA-like_N"/>
</dbReference>
<dbReference type="InterPro" id="IPR020588">
    <property type="entry name" value="RecA_ATP-bd"/>
</dbReference>
<dbReference type="InterPro" id="IPR023400">
    <property type="entry name" value="RecA_C_sf"/>
</dbReference>
<dbReference type="InterPro" id="IPR020587">
    <property type="entry name" value="RecA_monomer-monomer_interface"/>
</dbReference>
<dbReference type="NCBIfam" id="TIGR02012">
    <property type="entry name" value="tigrfam_recA"/>
    <property type="match status" value="1"/>
</dbReference>
<dbReference type="PANTHER" id="PTHR45900:SF1">
    <property type="entry name" value="MITOCHONDRIAL DNA REPAIR PROTEIN RECA HOMOLOG-RELATED"/>
    <property type="match status" value="1"/>
</dbReference>
<dbReference type="PANTHER" id="PTHR45900">
    <property type="entry name" value="RECA"/>
    <property type="match status" value="1"/>
</dbReference>
<dbReference type="Pfam" id="PF00154">
    <property type="entry name" value="RecA"/>
    <property type="match status" value="1"/>
</dbReference>
<dbReference type="Pfam" id="PF21096">
    <property type="entry name" value="RecA_C"/>
    <property type="match status" value="1"/>
</dbReference>
<dbReference type="PRINTS" id="PR00142">
    <property type="entry name" value="RECA"/>
</dbReference>
<dbReference type="SMART" id="SM00382">
    <property type="entry name" value="AAA"/>
    <property type="match status" value="1"/>
</dbReference>
<dbReference type="SUPFAM" id="SSF52540">
    <property type="entry name" value="P-loop containing nucleoside triphosphate hydrolases"/>
    <property type="match status" value="1"/>
</dbReference>
<dbReference type="SUPFAM" id="SSF54752">
    <property type="entry name" value="RecA protein, C-terminal domain"/>
    <property type="match status" value="1"/>
</dbReference>
<dbReference type="PROSITE" id="PS00321">
    <property type="entry name" value="RECA_1"/>
    <property type="match status" value="1"/>
</dbReference>
<dbReference type="PROSITE" id="PS50162">
    <property type="entry name" value="RECA_2"/>
    <property type="match status" value="1"/>
</dbReference>
<dbReference type="PROSITE" id="PS50163">
    <property type="entry name" value="RECA_3"/>
    <property type="match status" value="1"/>
</dbReference>
<sequence length="353" mass="37973">MAIDENKQKALAAALGQIEKQFGKGSIMRLGEDRSMDVETISTGSLSLDIALGAGGLPMGRIVEIYGPESSGKTTLTLQVIAAAQREGKTCAFIDAEHALDPIYARKLGVDIDNLLCSQPDTGEQALEICDALARSGAVDVIVVDSVAALTPKAEIEGEIGDSHMGLAARMMSQAMRKLAGNLKQSNTLLIFINQIRMKIGVMFGNPETTTGGNALKFYASVRLDIRRIGAVKEGENVVGSETRVKVVKNKIAAPFKQAEFQILYGEGINFYGELVDLGVKEKLIEKAGAWYSYKGEKIGQGKANATAWLKDNPETAKEIEKKVRELLLSNPNSTPDFSVDDSEGVAETNEDF</sequence>
<organism>
    <name type="scientific">Escherichia coli O8 (strain IAI1)</name>
    <dbReference type="NCBI Taxonomy" id="585034"/>
    <lineage>
        <taxon>Bacteria</taxon>
        <taxon>Pseudomonadati</taxon>
        <taxon>Pseudomonadota</taxon>
        <taxon>Gammaproteobacteria</taxon>
        <taxon>Enterobacterales</taxon>
        <taxon>Enterobacteriaceae</taxon>
        <taxon>Escherichia</taxon>
    </lineage>
</organism>
<comment type="function">
    <text evidence="1">Can catalyze the hydrolysis of ATP in the presence of single-stranded DNA, the ATP-dependent uptake of single-stranded DNA by duplex DNA, and the ATP-dependent hybridization of homologous single-stranded DNAs. It interacts with LexA causing its activation and leading to its autocatalytic cleavage.</text>
</comment>
<comment type="subcellular location">
    <subcellularLocation>
        <location evidence="1">Cytoplasm</location>
    </subcellularLocation>
</comment>
<comment type="similarity">
    <text evidence="1">Belongs to the RecA family.</text>
</comment>
<protein>
    <recommendedName>
        <fullName evidence="1">Protein RecA</fullName>
    </recommendedName>
    <alternativeName>
        <fullName evidence="1">Recombinase A</fullName>
    </alternativeName>
</protein>
<evidence type="ECO:0000255" key="1">
    <source>
        <dbReference type="HAMAP-Rule" id="MF_00268"/>
    </source>
</evidence>
<evidence type="ECO:0000256" key="2">
    <source>
        <dbReference type="SAM" id="MobiDB-lite"/>
    </source>
</evidence>
<proteinExistence type="inferred from homology"/>